<reference key="1">
    <citation type="journal article" date="2000" name="Nature">
        <title>Sequence and analysis of chromosome 3 of the plant Arabidopsis thaliana.</title>
        <authorList>
            <person name="Salanoubat M."/>
            <person name="Lemcke K."/>
            <person name="Rieger M."/>
            <person name="Ansorge W."/>
            <person name="Unseld M."/>
            <person name="Fartmann B."/>
            <person name="Valle G."/>
            <person name="Bloecker H."/>
            <person name="Perez-Alonso M."/>
            <person name="Obermaier B."/>
            <person name="Delseny M."/>
            <person name="Boutry M."/>
            <person name="Grivell L.A."/>
            <person name="Mache R."/>
            <person name="Puigdomenech P."/>
            <person name="De Simone V."/>
            <person name="Choisne N."/>
            <person name="Artiguenave F."/>
            <person name="Robert C."/>
            <person name="Brottier P."/>
            <person name="Wincker P."/>
            <person name="Cattolico L."/>
            <person name="Weissenbach J."/>
            <person name="Saurin W."/>
            <person name="Quetier F."/>
            <person name="Schaefer M."/>
            <person name="Mueller-Auer S."/>
            <person name="Gabel C."/>
            <person name="Fuchs M."/>
            <person name="Benes V."/>
            <person name="Wurmbach E."/>
            <person name="Drzonek H."/>
            <person name="Erfle H."/>
            <person name="Jordan N."/>
            <person name="Bangert S."/>
            <person name="Wiedelmann R."/>
            <person name="Kranz H."/>
            <person name="Voss H."/>
            <person name="Holland R."/>
            <person name="Brandt P."/>
            <person name="Nyakatura G."/>
            <person name="Vezzi A."/>
            <person name="D'Angelo M."/>
            <person name="Pallavicini A."/>
            <person name="Toppo S."/>
            <person name="Simionati B."/>
            <person name="Conrad A."/>
            <person name="Hornischer K."/>
            <person name="Kauer G."/>
            <person name="Loehnert T.-H."/>
            <person name="Nordsiek G."/>
            <person name="Reichelt J."/>
            <person name="Scharfe M."/>
            <person name="Schoen O."/>
            <person name="Bargues M."/>
            <person name="Terol J."/>
            <person name="Climent J."/>
            <person name="Navarro P."/>
            <person name="Collado C."/>
            <person name="Perez-Perez A."/>
            <person name="Ottenwaelder B."/>
            <person name="Duchemin D."/>
            <person name="Cooke R."/>
            <person name="Laudie M."/>
            <person name="Berger-Llauro C."/>
            <person name="Purnelle B."/>
            <person name="Masuy D."/>
            <person name="de Haan M."/>
            <person name="Maarse A.C."/>
            <person name="Alcaraz J.-P."/>
            <person name="Cottet A."/>
            <person name="Casacuberta E."/>
            <person name="Monfort A."/>
            <person name="Argiriou A."/>
            <person name="Flores M."/>
            <person name="Liguori R."/>
            <person name="Vitale D."/>
            <person name="Mannhaupt G."/>
            <person name="Haase D."/>
            <person name="Schoof H."/>
            <person name="Rudd S."/>
            <person name="Zaccaria P."/>
            <person name="Mewes H.-W."/>
            <person name="Mayer K.F.X."/>
            <person name="Kaul S."/>
            <person name="Town C.D."/>
            <person name="Koo H.L."/>
            <person name="Tallon L.J."/>
            <person name="Jenkins J."/>
            <person name="Rooney T."/>
            <person name="Rizzo M."/>
            <person name="Walts A."/>
            <person name="Utterback T."/>
            <person name="Fujii C.Y."/>
            <person name="Shea T.P."/>
            <person name="Creasy T.H."/>
            <person name="Haas B."/>
            <person name="Maiti R."/>
            <person name="Wu D."/>
            <person name="Peterson J."/>
            <person name="Van Aken S."/>
            <person name="Pai G."/>
            <person name="Militscher J."/>
            <person name="Sellers P."/>
            <person name="Gill J.E."/>
            <person name="Feldblyum T.V."/>
            <person name="Preuss D."/>
            <person name="Lin X."/>
            <person name="Nierman W.C."/>
            <person name="Salzberg S.L."/>
            <person name="White O."/>
            <person name="Venter J.C."/>
            <person name="Fraser C.M."/>
            <person name="Kaneko T."/>
            <person name="Nakamura Y."/>
            <person name="Sato S."/>
            <person name="Kato T."/>
            <person name="Asamizu E."/>
            <person name="Sasamoto S."/>
            <person name="Kimura T."/>
            <person name="Idesawa K."/>
            <person name="Kawashima K."/>
            <person name="Kishida Y."/>
            <person name="Kiyokawa C."/>
            <person name="Kohara M."/>
            <person name="Matsumoto M."/>
            <person name="Matsuno A."/>
            <person name="Muraki A."/>
            <person name="Nakayama S."/>
            <person name="Nakazaki N."/>
            <person name="Shinpo S."/>
            <person name="Takeuchi C."/>
            <person name="Wada T."/>
            <person name="Watanabe A."/>
            <person name="Yamada M."/>
            <person name="Yasuda M."/>
            <person name="Tabata S."/>
        </authorList>
    </citation>
    <scope>NUCLEOTIDE SEQUENCE [LARGE SCALE GENOMIC DNA]</scope>
    <source>
        <strain>cv. Columbia</strain>
    </source>
</reference>
<reference key="2">
    <citation type="journal article" date="2017" name="Plant J.">
        <title>Araport11: a complete reannotation of the Arabidopsis thaliana reference genome.</title>
        <authorList>
            <person name="Cheng C.Y."/>
            <person name="Krishnakumar V."/>
            <person name="Chan A.P."/>
            <person name="Thibaud-Nissen F."/>
            <person name="Schobel S."/>
            <person name="Town C.D."/>
        </authorList>
    </citation>
    <scope>GENOME REANNOTATION</scope>
    <source>
        <strain>cv. Columbia</strain>
    </source>
</reference>
<reference key="3">
    <citation type="journal article" date="2002" name="Science">
        <title>Functional annotation of a full-length Arabidopsis cDNA collection.</title>
        <authorList>
            <person name="Seki M."/>
            <person name="Narusaka M."/>
            <person name="Kamiya A."/>
            <person name="Ishida J."/>
            <person name="Satou M."/>
            <person name="Sakurai T."/>
            <person name="Nakajima M."/>
            <person name="Enju A."/>
            <person name="Akiyama K."/>
            <person name="Oono Y."/>
            <person name="Muramatsu M."/>
            <person name="Hayashizaki Y."/>
            <person name="Kawai J."/>
            <person name="Carninci P."/>
            <person name="Itoh M."/>
            <person name="Ishii Y."/>
            <person name="Arakawa T."/>
            <person name="Shibata K."/>
            <person name="Shinagawa A."/>
            <person name="Shinozaki K."/>
        </authorList>
    </citation>
    <scope>NUCLEOTIDE SEQUENCE [LARGE SCALE MRNA] (ISOFORM 1)</scope>
    <source>
        <strain>cv. Columbia</strain>
    </source>
</reference>
<reference key="4">
    <citation type="journal article" date="2003" name="Science">
        <title>Empirical analysis of transcriptional activity in the Arabidopsis genome.</title>
        <authorList>
            <person name="Yamada K."/>
            <person name="Lim J."/>
            <person name="Dale J.M."/>
            <person name="Chen H."/>
            <person name="Shinn P."/>
            <person name="Palm C.J."/>
            <person name="Southwick A.M."/>
            <person name="Wu H.C."/>
            <person name="Kim C.J."/>
            <person name="Nguyen M."/>
            <person name="Pham P.K."/>
            <person name="Cheuk R.F."/>
            <person name="Karlin-Newmann G."/>
            <person name="Liu S.X."/>
            <person name="Lam B."/>
            <person name="Sakano H."/>
            <person name="Wu T."/>
            <person name="Yu G."/>
            <person name="Miranda M."/>
            <person name="Quach H.L."/>
            <person name="Tripp M."/>
            <person name="Chang C.H."/>
            <person name="Lee J.M."/>
            <person name="Toriumi M.J."/>
            <person name="Chan M.M."/>
            <person name="Tang C.C."/>
            <person name="Onodera C.S."/>
            <person name="Deng J.M."/>
            <person name="Akiyama K."/>
            <person name="Ansari Y."/>
            <person name="Arakawa T."/>
            <person name="Banh J."/>
            <person name="Banno F."/>
            <person name="Bowser L."/>
            <person name="Brooks S.Y."/>
            <person name="Carninci P."/>
            <person name="Chao Q."/>
            <person name="Choy N."/>
            <person name="Enju A."/>
            <person name="Goldsmith A.D."/>
            <person name="Gurjal M."/>
            <person name="Hansen N.F."/>
            <person name="Hayashizaki Y."/>
            <person name="Johnson-Hopson C."/>
            <person name="Hsuan V.W."/>
            <person name="Iida K."/>
            <person name="Karnes M."/>
            <person name="Khan S."/>
            <person name="Koesema E."/>
            <person name="Ishida J."/>
            <person name="Jiang P.X."/>
            <person name="Jones T."/>
            <person name="Kawai J."/>
            <person name="Kamiya A."/>
            <person name="Meyers C."/>
            <person name="Nakajima M."/>
            <person name="Narusaka M."/>
            <person name="Seki M."/>
            <person name="Sakurai T."/>
            <person name="Satou M."/>
            <person name="Tamse R."/>
            <person name="Vaysberg M."/>
            <person name="Wallender E.K."/>
            <person name="Wong C."/>
            <person name="Yamamura Y."/>
            <person name="Yuan S."/>
            <person name="Shinozaki K."/>
            <person name="Davis R.W."/>
            <person name="Theologis A."/>
            <person name="Ecker J.R."/>
        </authorList>
    </citation>
    <scope>NUCLEOTIDE SEQUENCE [LARGE SCALE MRNA] (ISOFORM 1)</scope>
    <source>
        <strain>cv. Columbia</strain>
    </source>
</reference>
<reference key="5">
    <citation type="journal article" date="2004" name="Genome Res.">
        <title>Whole genome sequence comparisons and 'full-length' cDNA sequences: a combined approach to evaluate and improve Arabidopsis genome annotation.</title>
        <authorList>
            <person name="Castelli V."/>
            <person name="Aury J.-M."/>
            <person name="Jaillon O."/>
            <person name="Wincker P."/>
            <person name="Clepet C."/>
            <person name="Menard M."/>
            <person name="Cruaud C."/>
            <person name="Quetier F."/>
            <person name="Scarpelli C."/>
            <person name="Schaechter V."/>
            <person name="Temple G."/>
            <person name="Caboche M."/>
            <person name="Weissenbach J."/>
            <person name="Salanoubat M."/>
        </authorList>
    </citation>
    <scope>NUCLEOTIDE SEQUENCE [LARGE SCALE MRNA] (ISOFORM 2)</scope>
    <source>
        <strain>cv. Columbia</strain>
    </source>
</reference>
<reference key="6">
    <citation type="journal article" date="2019" name="J. Plant Physiol.">
        <title>Characterization the role of a UFC homolog, AtAuxRP3, in the regulation of Arabidopsis seedling growth and stress response.</title>
        <authorList>
            <person name="Shen L."/>
            <person name="Zhong T."/>
            <person name="Wang L."/>
            <person name="Zhang Q."/>
            <person name="Jin H."/>
            <person name="Xu M."/>
            <person name="Ye J."/>
        </authorList>
    </citation>
    <scope>FUNCTION</scope>
    <source>
        <strain>cv. Columbia</strain>
    </source>
</reference>
<reference key="7">
    <citation type="journal article" date="2019" name="Nat. Plants">
        <title>A SOSEKI-based coordinate system interprets global polarity cues in Arabidopsis.</title>
        <authorList>
            <person name="Yoshida S."/>
            <person name="van der Schuren A."/>
            <person name="van Dop M."/>
            <person name="van Galen L."/>
            <person name="Saiga S."/>
            <person name="Adibi M."/>
            <person name="Moeller B."/>
            <person name="Ten Hove C.A."/>
            <person name="Marhavy P."/>
            <person name="Smith R."/>
            <person name="Friml J."/>
            <person name="Weijers D."/>
        </authorList>
    </citation>
    <scope>FUNCTION</scope>
    <scope>SUBCELLULAR LOCATION</scope>
    <scope>DEVELOPMENTAL STAGE</scope>
    <scope>TISSUE SPECIFICITY</scope>
    <source>
        <strain>cv. Columbia</strain>
    </source>
</reference>
<reference key="8">
    <citation type="journal article" date="2020" name="Cell">
        <title>DIX domain polymerization drives assembly of plant cell polarity complexes.</title>
        <authorList>
            <person name="van Dop M."/>
            <person name="Fiedler M."/>
            <person name="Mutte S."/>
            <person name="de Keijzer J."/>
            <person name="Olijslager L."/>
            <person name="Albrecht C."/>
            <person name="Liao C.Y."/>
            <person name="Janson M.E."/>
            <person name="Bienz M."/>
            <person name="Weijers D."/>
        </authorList>
    </citation>
    <scope>X-RAY CRYSTALLOGRAPHY (1.70 ANGSTROMS) OF 15-109</scope>
    <scope>FUNCTION</scope>
    <scope>INTERACTION WITH ANGUSTIFOLIA</scope>
    <scope>MUTAGENESIS OF ASP-85</scope>
    <scope>DOMAIN</scope>
    <scope>SUBUNIT</scope>
    <scope>GENE FAMILY</scope>
</reference>
<sequence length="343" mass="38927">MALVSSRATQDSKPSRERIVPVVYYLSRNGRLDHPHFIEVPLSSHNGLYLKDVINRLNDLRGNGMACLYSWSSKRTYKNGFVWYDLSDEDFIFPVHGQEYVLKGSQILDLDNNSGNFSAVTHRRNQSWSSVDHYKVYKASELNAEATRKLSMDASTQTDDRRRRKSPVDEVNEVTELSREEITSPPQSDSSPETLESLMRADGRLILLQEDQELNRTVEKMRPSAVLMQLISCGAMSFKKCGPTLMNGNTRSTAVRGTGNYRLERAEKELKSFGRVKLEEKEYFSGSLIDESSKKELVPALKRSSSYNIDRSSRMGLTKEKEGEELARANFIPRNPNSVVGQP</sequence>
<keyword id="KW-0002">3D-structure</keyword>
<keyword id="KW-0025">Alternative splicing</keyword>
<keyword id="KW-0927">Auxin signaling pathway</keyword>
<keyword id="KW-0131">Cell cycle</keyword>
<keyword id="KW-0132">Cell division</keyword>
<keyword id="KW-1003">Cell membrane</keyword>
<keyword id="KW-0217">Developmental protein</keyword>
<keyword id="KW-0472">Membrane</keyword>
<keyword id="KW-1185">Reference proteome</keyword>
<keyword id="KW-0346">Stress response</keyword>
<gene>
    <name evidence="6" type="primary">SOK4</name>
    <name evidence="7" type="synonym">AUXRP3</name>
    <name evidence="10" type="ordered locus">At3g46110</name>
    <name evidence="11" type="ORF">F12M12.80</name>
</gene>
<evidence type="ECO:0000250" key="1">
    <source>
        <dbReference type="UniProtKB" id="Q9SYJ8"/>
    </source>
</evidence>
<evidence type="ECO:0000256" key="2">
    <source>
        <dbReference type="SAM" id="MobiDB-lite"/>
    </source>
</evidence>
<evidence type="ECO:0000269" key="3">
    <source>
    </source>
</evidence>
<evidence type="ECO:0000269" key="4">
    <source>
    </source>
</evidence>
<evidence type="ECO:0000269" key="5">
    <source>
    </source>
</evidence>
<evidence type="ECO:0000303" key="6">
    <source>
    </source>
</evidence>
<evidence type="ECO:0000303" key="7">
    <source>
    </source>
</evidence>
<evidence type="ECO:0000303" key="8">
    <source>
    </source>
</evidence>
<evidence type="ECO:0000305" key="9"/>
<evidence type="ECO:0000312" key="10">
    <source>
        <dbReference type="Araport" id="AT3G46110"/>
    </source>
</evidence>
<evidence type="ECO:0000312" key="11">
    <source>
        <dbReference type="EMBL" id="CAB90938.1"/>
    </source>
</evidence>
<evidence type="ECO:0007829" key="12">
    <source>
        <dbReference type="PDB" id="6RSN"/>
    </source>
</evidence>
<feature type="chain" id="PRO_0000452143" description="Protein SOSEKI 4">
    <location>
        <begin position="1"/>
        <end position="343"/>
    </location>
</feature>
<feature type="region of interest" description="DIX-like oligomerization domain" evidence="8">
    <location>
        <begin position="18"/>
        <end position="109"/>
    </location>
</feature>
<feature type="region of interest" description="Disordered" evidence="2">
    <location>
        <begin position="148"/>
        <end position="194"/>
    </location>
</feature>
<feature type="short sequence motif" description="Association to cell membranes" evidence="1">
    <location>
        <begin position="233"/>
        <end position="234"/>
    </location>
</feature>
<feature type="compositionally biased region" description="Polar residues" evidence="2">
    <location>
        <begin position="184"/>
        <end position="194"/>
    </location>
</feature>
<feature type="splice variant" id="VSP_060913" description="In isoform 2.">
    <location>
        <begin position="312"/>
        <end position="343"/>
    </location>
</feature>
<feature type="mutagenesis site" description="Severely attenuated polymerization." evidence="5">
    <original>D</original>
    <variation>A</variation>
    <location>
        <position position="85"/>
    </location>
</feature>
<feature type="sequence conflict" description="In Ref. 5; BX823834." evidence="9" ref="5">
    <original>N</original>
    <variation>S</variation>
    <location>
        <position position="58"/>
    </location>
</feature>
<feature type="sequence conflict" description="In Ref. 5; BX823834." evidence="9" ref="5">
    <original>F</original>
    <variation>L</variation>
    <location>
        <position position="284"/>
    </location>
</feature>
<feature type="strand" evidence="12">
    <location>
        <begin position="19"/>
        <end position="30"/>
    </location>
</feature>
<feature type="strand" evidence="12">
    <location>
        <begin position="36"/>
        <end position="41"/>
    </location>
</feature>
<feature type="strand" evidence="12">
    <location>
        <begin position="47"/>
        <end position="49"/>
    </location>
</feature>
<feature type="helix" evidence="12">
    <location>
        <begin position="50"/>
        <end position="61"/>
    </location>
</feature>
<feature type="turn" evidence="12">
    <location>
        <begin position="63"/>
        <end position="65"/>
    </location>
</feature>
<feature type="helix" evidence="12">
    <location>
        <begin position="66"/>
        <end position="68"/>
    </location>
</feature>
<feature type="strand" evidence="12">
    <location>
        <begin position="69"/>
        <end position="77"/>
    </location>
</feature>
<feature type="strand" evidence="12">
    <location>
        <begin position="80"/>
        <end position="85"/>
    </location>
</feature>
<feature type="turn" evidence="12">
    <location>
        <begin position="96"/>
        <end position="98"/>
    </location>
</feature>
<feature type="strand" evidence="12">
    <location>
        <begin position="99"/>
        <end position="106"/>
    </location>
</feature>
<name>SOK4_ARATH</name>
<proteinExistence type="evidence at protein level"/>
<accession>Q8GY65</accession>
<accession>F4J7X6</accession>
<accession>Q9LX84</accession>
<dbReference type="EMBL" id="AL355775">
    <property type="protein sequence ID" value="CAB90938.1"/>
    <property type="status" value="ALT_SEQ"/>
    <property type="molecule type" value="Genomic_DNA"/>
</dbReference>
<dbReference type="EMBL" id="CP002686">
    <property type="protein sequence ID" value="AEE78114.1"/>
    <property type="molecule type" value="Genomic_DNA"/>
</dbReference>
<dbReference type="EMBL" id="CP002686">
    <property type="protein sequence ID" value="AEE78115.1"/>
    <property type="molecule type" value="Genomic_DNA"/>
</dbReference>
<dbReference type="EMBL" id="BT005317">
    <property type="protein sequence ID" value="AAO63381.1"/>
    <property type="molecule type" value="mRNA"/>
</dbReference>
<dbReference type="EMBL" id="AK117838">
    <property type="protein sequence ID" value="BAC42479.1"/>
    <property type="molecule type" value="mRNA"/>
</dbReference>
<dbReference type="EMBL" id="BX823834">
    <property type="status" value="NOT_ANNOTATED_CDS"/>
    <property type="molecule type" value="mRNA"/>
</dbReference>
<dbReference type="PIR" id="T49252">
    <property type="entry name" value="T49252"/>
</dbReference>
<dbReference type="RefSeq" id="NP_190197.2">
    <molecule id="Q8GY65-1"/>
    <property type="nucleotide sequence ID" value="NM_114480.4"/>
</dbReference>
<dbReference type="RefSeq" id="NP_974389.1">
    <molecule id="Q8GY65-2"/>
    <property type="nucleotide sequence ID" value="NM_202660.2"/>
</dbReference>
<dbReference type="PDB" id="6RSN">
    <property type="method" value="X-ray"/>
    <property type="resolution" value="1.70 A"/>
    <property type="chains" value="A=15-109"/>
</dbReference>
<dbReference type="PDBsum" id="6RSN"/>
<dbReference type="SMR" id="Q8GY65"/>
<dbReference type="FunCoup" id="Q8GY65">
    <property type="interactions" value="80"/>
</dbReference>
<dbReference type="STRING" id="3702.Q8GY65"/>
<dbReference type="iPTMnet" id="Q8GY65"/>
<dbReference type="PaxDb" id="3702-AT3G46110.1"/>
<dbReference type="ProteomicsDB" id="180937"/>
<dbReference type="ProteomicsDB" id="199671"/>
<dbReference type="EnsemblPlants" id="AT3G46110.1">
    <molecule id="Q8GY65-1"/>
    <property type="protein sequence ID" value="AT3G46110.1"/>
    <property type="gene ID" value="AT3G46110"/>
</dbReference>
<dbReference type="EnsemblPlants" id="AT3G46110.2">
    <molecule id="Q8GY65-2"/>
    <property type="protein sequence ID" value="AT3G46110.2"/>
    <property type="gene ID" value="AT3G46110"/>
</dbReference>
<dbReference type="GeneID" id="823754"/>
<dbReference type="Gramene" id="AT3G46110.1">
    <molecule id="Q8GY65-1"/>
    <property type="protein sequence ID" value="AT3G46110.1"/>
    <property type="gene ID" value="AT3G46110"/>
</dbReference>
<dbReference type="Gramene" id="AT3G46110.2">
    <molecule id="Q8GY65-2"/>
    <property type="protein sequence ID" value="AT3G46110.2"/>
    <property type="gene ID" value="AT3G46110"/>
</dbReference>
<dbReference type="KEGG" id="ath:AT3G46110"/>
<dbReference type="Araport" id="AT3G46110"/>
<dbReference type="TAIR" id="AT3G46110">
    <property type="gene designation" value="SOK4"/>
</dbReference>
<dbReference type="eggNOG" id="ENOG502QTBW">
    <property type="taxonomic scope" value="Eukaryota"/>
</dbReference>
<dbReference type="HOGENOM" id="CLU_025038_0_0_1"/>
<dbReference type="InParanoid" id="Q8GY65"/>
<dbReference type="OMA" id="NIVWTEP"/>
<dbReference type="PhylomeDB" id="Q8GY65"/>
<dbReference type="PRO" id="PR:Q8GY65"/>
<dbReference type="Proteomes" id="UP000006548">
    <property type="component" value="Chromosome 3"/>
</dbReference>
<dbReference type="ExpressionAtlas" id="Q8GY65">
    <property type="expression patterns" value="baseline and differential"/>
</dbReference>
<dbReference type="GO" id="GO:0005886">
    <property type="term" value="C:plasma membrane"/>
    <property type="evidence" value="ECO:0007669"/>
    <property type="project" value="UniProtKB-SubCell"/>
</dbReference>
<dbReference type="GO" id="GO:0042803">
    <property type="term" value="F:protein homodimerization activity"/>
    <property type="evidence" value="ECO:0000250"/>
    <property type="project" value="UniProtKB"/>
</dbReference>
<dbReference type="GO" id="GO:0009734">
    <property type="term" value="P:auxin-activated signaling pathway"/>
    <property type="evidence" value="ECO:0007669"/>
    <property type="project" value="UniProtKB-KW"/>
</dbReference>
<dbReference type="GO" id="GO:0051301">
    <property type="term" value="P:cell division"/>
    <property type="evidence" value="ECO:0007669"/>
    <property type="project" value="UniProtKB-KW"/>
</dbReference>
<dbReference type="GO" id="GO:0010229">
    <property type="term" value="P:inflorescence development"/>
    <property type="evidence" value="ECO:0000315"/>
    <property type="project" value="UniProtKB"/>
</dbReference>
<dbReference type="GO" id="GO:1905392">
    <property type="term" value="P:plant organ morphogenesis"/>
    <property type="evidence" value="ECO:0000315"/>
    <property type="project" value="UniProtKB"/>
</dbReference>
<dbReference type="GO" id="GO:0051258">
    <property type="term" value="P:protein polymerization"/>
    <property type="evidence" value="ECO:0000314"/>
    <property type="project" value="UniProtKB"/>
</dbReference>
<dbReference type="GO" id="GO:0010600">
    <property type="term" value="P:regulation of auxin biosynthetic process"/>
    <property type="evidence" value="ECO:0000315"/>
    <property type="project" value="UniProtKB"/>
</dbReference>
<dbReference type="GO" id="GO:0010928">
    <property type="term" value="P:regulation of auxin mediated signaling pathway"/>
    <property type="evidence" value="ECO:0000315"/>
    <property type="project" value="UniProtKB"/>
</dbReference>
<dbReference type="GO" id="GO:0051302">
    <property type="term" value="P:regulation of cell division"/>
    <property type="evidence" value="ECO:0000315"/>
    <property type="project" value="UniProtKB"/>
</dbReference>
<dbReference type="GO" id="GO:2000024">
    <property type="term" value="P:regulation of leaf development"/>
    <property type="evidence" value="ECO:0000315"/>
    <property type="project" value="UniProtKB"/>
</dbReference>
<dbReference type="GO" id="GO:2000067">
    <property type="term" value="P:regulation of root morphogenesis"/>
    <property type="evidence" value="ECO:0000315"/>
    <property type="project" value="UniProtKB"/>
</dbReference>
<dbReference type="GO" id="GO:0006970">
    <property type="term" value="P:response to osmotic stress"/>
    <property type="evidence" value="ECO:0000315"/>
    <property type="project" value="UniProtKB"/>
</dbReference>
<dbReference type="GO" id="GO:1902074">
    <property type="term" value="P:response to salt"/>
    <property type="evidence" value="ECO:0000315"/>
    <property type="project" value="UniProtKB"/>
</dbReference>
<dbReference type="GO" id="GO:0090708">
    <property type="term" value="P:specification of plant organ axis polarity"/>
    <property type="evidence" value="ECO:0000315"/>
    <property type="project" value="UniProtKB"/>
</dbReference>
<dbReference type="Gene3D" id="2.30.30.40">
    <property type="entry name" value="SH3 Domains"/>
    <property type="match status" value="1"/>
</dbReference>
<dbReference type="InterPro" id="IPR010369">
    <property type="entry name" value="SOK"/>
</dbReference>
<dbReference type="InterPro" id="IPR048351">
    <property type="entry name" value="SOK_DIX"/>
</dbReference>
<dbReference type="InterPro" id="IPR021182">
    <property type="entry name" value="SOK_magnoliopsida"/>
</dbReference>
<dbReference type="PANTHER" id="PTHR31083:SF4">
    <property type="entry name" value="PROTEIN SOSEKI 4-RELATED"/>
    <property type="match status" value="1"/>
</dbReference>
<dbReference type="PANTHER" id="PTHR31083">
    <property type="entry name" value="UPSTREAM OF FLC PROTEIN (DUF966)"/>
    <property type="match status" value="1"/>
</dbReference>
<dbReference type="Pfam" id="PF06136">
    <property type="entry name" value="SOK"/>
    <property type="match status" value="1"/>
</dbReference>
<dbReference type="PIRSF" id="PIRSF031043">
    <property type="entry name" value="UCP031043"/>
    <property type="match status" value="1"/>
</dbReference>
<organism>
    <name type="scientific">Arabidopsis thaliana</name>
    <name type="common">Mouse-ear cress</name>
    <dbReference type="NCBI Taxonomy" id="3702"/>
    <lineage>
        <taxon>Eukaryota</taxon>
        <taxon>Viridiplantae</taxon>
        <taxon>Streptophyta</taxon>
        <taxon>Embryophyta</taxon>
        <taxon>Tracheophyta</taxon>
        <taxon>Spermatophyta</taxon>
        <taxon>Magnoliopsida</taxon>
        <taxon>eudicotyledons</taxon>
        <taxon>Gunneridae</taxon>
        <taxon>Pentapetalae</taxon>
        <taxon>rosids</taxon>
        <taxon>malvids</taxon>
        <taxon>Brassicales</taxon>
        <taxon>Brassicaceae</taxon>
        <taxon>Camelineae</taxon>
        <taxon>Arabidopsis</taxon>
    </lineage>
</organism>
<protein>
    <recommendedName>
        <fullName evidence="6">Protein SOSEKI 4</fullName>
        <shortName evidence="8">AtSOK4</shortName>
    </recommendedName>
    <alternativeName>
        <fullName evidence="7">Auxin-regulated protein 3</fullName>
        <shortName evidence="7">AtAuxRP3</shortName>
    </alternativeName>
</protein>
<comment type="function">
    <text evidence="3 4">SOSEKI proteins (SOK1-5) locally interpret global polarity cues and can influence cell division orientation to coordinate cell polarization relative to body axes, probably by guiding ANGUSTIFOLIA (AN) polarized localization (PubMed:30737509). Positive regulator of auxin (indole-3-acetic acid, IAA) biosynthesis and signaling pathway leading to the modulation of seedling growth, plant and inflorescence development (PubMed:31207460). Negative regulator of stress responses (e.g. salinity and osmotic stress) (PubMed:31207460).</text>
</comment>
<comment type="subunit">
    <text evidence="1 5">Homodimer (By similarity). Forms long polymer filaments with other SOKs proteins polymers (e.g. SOK1, SOK2, SOK3 and SOK4) crucial for polar localization and biological activity (PubMed:32004461). Binds to ANGUSTIFOLIA (AN) (PubMed:32004461).</text>
</comment>
<comment type="subcellular location">
    <subcellularLocation>
        <location evidence="3">Cell membrane</location>
        <topology evidence="3">Peripheral membrane protein</topology>
        <orientation evidence="3">Cytoplasmic side</orientation>
    </subcellularLocation>
    <text evidence="3">SOSEKI proteins integrate apical-basal and radial organismal axes to localize to polar cell edges.</text>
</comment>
<comment type="alternative products">
    <event type="alternative splicing"/>
    <isoform>
        <id>Q8GY65-1</id>
        <name>1</name>
        <sequence type="displayed"/>
    </isoform>
    <isoform>
        <id>Q8GY65-2</id>
        <name>2</name>
        <sequence type="described" ref="VSP_060913"/>
    </isoform>
</comment>
<comment type="tissue specificity">
    <text evidence="3">Expressed during embryogenesis and in roots.</text>
</comment>
<comment type="developmental stage">
    <text evidence="3">During embryogenesis, first observed at the globular stage and accumulates in cells next to the suspensor, including lens-shaped cells (PubMed:30737509). Observed at low levels in few vascular cells of the primary root (PubMed:30737509). Also expressed in lateral root (PubMed:30737509).</text>
</comment>
<comment type="domain">
    <text evidence="5">The DIX-like oligomerization domain is required for polymerization, edge localization and biological activity.</text>
</comment>
<comment type="miscellaneous">
    <text evidence="6">'Soseki' means cornerstone in Japanese.</text>
</comment>
<comment type="similarity">
    <text evidence="9">Belongs to the SOSEKI family.</text>
</comment>
<comment type="sequence caution" evidence="9">
    <conflict type="erroneous gene model prediction">
        <sequence resource="EMBL-CDS" id="CAB90938"/>
    </conflict>
</comment>